<sequence length="338" mass="36992">MSEVEGGIINRKLQGEFVNTFIRQLKFHREDFKNIGYIGGFTSIIDMGNFGITFNNDGVGTKAMIAEAVNKYDTLGIDCVAMNVNDAITVGSEPIAMVDYLAVNKMDEEMAKQLGTGFNVGAQMANISIVGGETAVLPDVVKHIDISGAVIGIVQKNQIITGSNIKEGDVIIGLGSSGLHSNGFTTVRKIIADNNLDLQDTFPGDSKKTYEVLLEPTRIYVREILDIMGIITIKGMANITGGGFKNITRMKDMKYVIDDPFEPQNVFIRLMEMGNLNYAQMFEIFNMGTGFVLVIDEDEKVDIMNALKGKVPVKVMGHVENGSGVEIPKYEVSLKGYY</sequence>
<protein>
    <recommendedName>
        <fullName evidence="1">Phosphoribosylformylglycinamidine cyclo-ligase</fullName>
        <ecNumber evidence="1">6.3.3.1</ecNumber>
    </recommendedName>
    <alternativeName>
        <fullName evidence="1">AIR synthase</fullName>
    </alternativeName>
    <alternativeName>
        <fullName evidence="1">AIRS</fullName>
    </alternativeName>
    <alternativeName>
        <fullName evidence="1">Phosphoribosyl-aminoimidazole synthetase</fullName>
    </alternativeName>
</protein>
<name>PUR5_THEAC</name>
<comment type="catalytic activity">
    <reaction evidence="1">
        <text>2-formamido-N(1)-(5-O-phospho-beta-D-ribosyl)acetamidine + ATP = 5-amino-1-(5-phospho-beta-D-ribosyl)imidazole + ADP + phosphate + H(+)</text>
        <dbReference type="Rhea" id="RHEA:23032"/>
        <dbReference type="ChEBI" id="CHEBI:15378"/>
        <dbReference type="ChEBI" id="CHEBI:30616"/>
        <dbReference type="ChEBI" id="CHEBI:43474"/>
        <dbReference type="ChEBI" id="CHEBI:137981"/>
        <dbReference type="ChEBI" id="CHEBI:147287"/>
        <dbReference type="ChEBI" id="CHEBI:456216"/>
        <dbReference type="EC" id="6.3.3.1"/>
    </reaction>
</comment>
<comment type="pathway">
    <text evidence="1">Purine metabolism; IMP biosynthesis via de novo pathway; 5-amino-1-(5-phospho-D-ribosyl)imidazole from N(2)-formyl-N(1)-(5-phospho-D-ribosyl)glycinamide: step 2/2.</text>
</comment>
<comment type="subcellular location">
    <subcellularLocation>
        <location evidence="1">Cytoplasm</location>
    </subcellularLocation>
</comment>
<comment type="similarity">
    <text evidence="1">Belongs to the AIR synthase family.</text>
</comment>
<evidence type="ECO:0000255" key="1">
    <source>
        <dbReference type="HAMAP-Rule" id="MF_00741"/>
    </source>
</evidence>
<reference key="1">
    <citation type="journal article" date="2000" name="Nature">
        <title>The genome sequence of the thermoacidophilic scavenger Thermoplasma acidophilum.</title>
        <authorList>
            <person name="Ruepp A."/>
            <person name="Graml W."/>
            <person name="Santos-Martinez M.-L."/>
            <person name="Koretke K.K."/>
            <person name="Volker C."/>
            <person name="Mewes H.-W."/>
            <person name="Frishman D."/>
            <person name="Stocker S."/>
            <person name="Lupas A.N."/>
            <person name="Baumeister W."/>
        </authorList>
    </citation>
    <scope>NUCLEOTIDE SEQUENCE [LARGE SCALE GENOMIC DNA]</scope>
    <source>
        <strain>ATCC 25905 / DSM 1728 / JCM 9062 / NBRC 15155 / AMRC-C165</strain>
    </source>
</reference>
<dbReference type="EC" id="6.3.3.1" evidence="1"/>
<dbReference type="EMBL" id="AL445063">
    <property type="protein sequence ID" value="CAC11238.1"/>
    <property type="molecule type" value="Genomic_DNA"/>
</dbReference>
<dbReference type="RefSeq" id="WP_010900517.1">
    <property type="nucleotide sequence ID" value="NC_002578.1"/>
</dbReference>
<dbReference type="SMR" id="Q9HLY3"/>
<dbReference type="FunCoup" id="Q9HLY3">
    <property type="interactions" value="102"/>
</dbReference>
<dbReference type="STRING" id="273075.gene:9571305"/>
<dbReference type="PaxDb" id="273075-Ta0090"/>
<dbReference type="EnsemblBacteria" id="CAC11238">
    <property type="protein sequence ID" value="CAC11238"/>
    <property type="gene ID" value="CAC11238"/>
</dbReference>
<dbReference type="KEGG" id="tac:Ta0090"/>
<dbReference type="eggNOG" id="arCOG00639">
    <property type="taxonomic scope" value="Archaea"/>
</dbReference>
<dbReference type="HOGENOM" id="CLU_047116_0_0_2"/>
<dbReference type="InParanoid" id="Q9HLY3"/>
<dbReference type="OrthoDB" id="6605at2157"/>
<dbReference type="UniPathway" id="UPA00074">
    <property type="reaction ID" value="UER00129"/>
</dbReference>
<dbReference type="Proteomes" id="UP000001024">
    <property type="component" value="Chromosome"/>
</dbReference>
<dbReference type="GO" id="GO:0005829">
    <property type="term" value="C:cytosol"/>
    <property type="evidence" value="ECO:0007669"/>
    <property type="project" value="TreeGrafter"/>
</dbReference>
<dbReference type="GO" id="GO:0005524">
    <property type="term" value="F:ATP binding"/>
    <property type="evidence" value="ECO:0007669"/>
    <property type="project" value="UniProtKB-KW"/>
</dbReference>
<dbReference type="GO" id="GO:0004637">
    <property type="term" value="F:phosphoribosylamine-glycine ligase activity"/>
    <property type="evidence" value="ECO:0007669"/>
    <property type="project" value="TreeGrafter"/>
</dbReference>
<dbReference type="GO" id="GO:0004641">
    <property type="term" value="F:phosphoribosylformylglycinamidine cyclo-ligase activity"/>
    <property type="evidence" value="ECO:0007669"/>
    <property type="project" value="UniProtKB-UniRule"/>
</dbReference>
<dbReference type="GO" id="GO:0006189">
    <property type="term" value="P:'de novo' IMP biosynthetic process"/>
    <property type="evidence" value="ECO:0007669"/>
    <property type="project" value="UniProtKB-UniRule"/>
</dbReference>
<dbReference type="GO" id="GO:0046084">
    <property type="term" value="P:adenine biosynthetic process"/>
    <property type="evidence" value="ECO:0007669"/>
    <property type="project" value="TreeGrafter"/>
</dbReference>
<dbReference type="CDD" id="cd02196">
    <property type="entry name" value="PurM"/>
    <property type="match status" value="1"/>
</dbReference>
<dbReference type="Gene3D" id="3.90.650.10">
    <property type="entry name" value="PurM-like C-terminal domain"/>
    <property type="match status" value="1"/>
</dbReference>
<dbReference type="Gene3D" id="3.30.1330.10">
    <property type="entry name" value="PurM-like, N-terminal domain"/>
    <property type="match status" value="1"/>
</dbReference>
<dbReference type="HAMAP" id="MF_00741">
    <property type="entry name" value="AIRS"/>
    <property type="match status" value="1"/>
</dbReference>
<dbReference type="InterPro" id="IPR010918">
    <property type="entry name" value="PurM-like_C_dom"/>
</dbReference>
<dbReference type="InterPro" id="IPR036676">
    <property type="entry name" value="PurM-like_C_sf"/>
</dbReference>
<dbReference type="InterPro" id="IPR016188">
    <property type="entry name" value="PurM-like_N"/>
</dbReference>
<dbReference type="InterPro" id="IPR036921">
    <property type="entry name" value="PurM-like_N_sf"/>
</dbReference>
<dbReference type="InterPro" id="IPR004733">
    <property type="entry name" value="PurM_cligase"/>
</dbReference>
<dbReference type="NCBIfam" id="TIGR00878">
    <property type="entry name" value="purM"/>
    <property type="match status" value="1"/>
</dbReference>
<dbReference type="PANTHER" id="PTHR10520:SF12">
    <property type="entry name" value="TRIFUNCTIONAL PURINE BIOSYNTHETIC PROTEIN ADENOSINE-3"/>
    <property type="match status" value="1"/>
</dbReference>
<dbReference type="PANTHER" id="PTHR10520">
    <property type="entry name" value="TRIFUNCTIONAL PURINE BIOSYNTHETIC PROTEIN ADENOSINE-3-RELATED"/>
    <property type="match status" value="1"/>
</dbReference>
<dbReference type="Pfam" id="PF00586">
    <property type="entry name" value="AIRS"/>
    <property type="match status" value="1"/>
</dbReference>
<dbReference type="Pfam" id="PF02769">
    <property type="entry name" value="AIRS_C"/>
    <property type="match status" value="1"/>
</dbReference>
<dbReference type="SUPFAM" id="SSF56042">
    <property type="entry name" value="PurM C-terminal domain-like"/>
    <property type="match status" value="1"/>
</dbReference>
<dbReference type="SUPFAM" id="SSF55326">
    <property type="entry name" value="PurM N-terminal domain-like"/>
    <property type="match status" value="1"/>
</dbReference>
<feature type="chain" id="PRO_0000148291" description="Phosphoribosylformylglycinamidine cyclo-ligase">
    <location>
        <begin position="1"/>
        <end position="338"/>
    </location>
</feature>
<organism>
    <name type="scientific">Thermoplasma acidophilum (strain ATCC 25905 / DSM 1728 / JCM 9062 / NBRC 15155 / AMRC-C165)</name>
    <dbReference type="NCBI Taxonomy" id="273075"/>
    <lineage>
        <taxon>Archaea</taxon>
        <taxon>Methanobacteriati</taxon>
        <taxon>Thermoplasmatota</taxon>
        <taxon>Thermoplasmata</taxon>
        <taxon>Thermoplasmatales</taxon>
        <taxon>Thermoplasmataceae</taxon>
        <taxon>Thermoplasma</taxon>
    </lineage>
</organism>
<accession>Q9HLY3</accession>
<keyword id="KW-0067">ATP-binding</keyword>
<keyword id="KW-0963">Cytoplasm</keyword>
<keyword id="KW-0436">Ligase</keyword>
<keyword id="KW-0547">Nucleotide-binding</keyword>
<keyword id="KW-0658">Purine biosynthesis</keyword>
<keyword id="KW-1185">Reference proteome</keyword>
<gene>
    <name evidence="1" type="primary">purM</name>
    <name type="ordered locus">Ta0090</name>
</gene>
<proteinExistence type="inferred from homology"/>